<proteinExistence type="inferred from homology"/>
<dbReference type="EC" id="6.3.4.4" evidence="1"/>
<dbReference type="EMBL" id="CP000764">
    <property type="protein sequence ID" value="ABS24188.1"/>
    <property type="molecule type" value="Genomic_DNA"/>
</dbReference>
<dbReference type="RefSeq" id="WP_012096450.1">
    <property type="nucleotide sequence ID" value="NC_009674.1"/>
</dbReference>
<dbReference type="SMR" id="A7GVN0"/>
<dbReference type="STRING" id="315749.Bcer98_4007"/>
<dbReference type="GeneID" id="33899237"/>
<dbReference type="KEGG" id="bcy:Bcer98_4007"/>
<dbReference type="eggNOG" id="COG0104">
    <property type="taxonomic scope" value="Bacteria"/>
</dbReference>
<dbReference type="HOGENOM" id="CLU_029848_0_0_9"/>
<dbReference type="OrthoDB" id="9807553at2"/>
<dbReference type="UniPathway" id="UPA00075">
    <property type="reaction ID" value="UER00335"/>
</dbReference>
<dbReference type="Proteomes" id="UP000002300">
    <property type="component" value="Chromosome"/>
</dbReference>
<dbReference type="GO" id="GO:0005737">
    <property type="term" value="C:cytoplasm"/>
    <property type="evidence" value="ECO:0007669"/>
    <property type="project" value="UniProtKB-SubCell"/>
</dbReference>
<dbReference type="GO" id="GO:0004019">
    <property type="term" value="F:adenylosuccinate synthase activity"/>
    <property type="evidence" value="ECO:0007669"/>
    <property type="project" value="UniProtKB-UniRule"/>
</dbReference>
<dbReference type="GO" id="GO:0005525">
    <property type="term" value="F:GTP binding"/>
    <property type="evidence" value="ECO:0007669"/>
    <property type="project" value="UniProtKB-UniRule"/>
</dbReference>
<dbReference type="GO" id="GO:0000287">
    <property type="term" value="F:magnesium ion binding"/>
    <property type="evidence" value="ECO:0007669"/>
    <property type="project" value="UniProtKB-UniRule"/>
</dbReference>
<dbReference type="GO" id="GO:0044208">
    <property type="term" value="P:'de novo' AMP biosynthetic process"/>
    <property type="evidence" value="ECO:0007669"/>
    <property type="project" value="UniProtKB-UniRule"/>
</dbReference>
<dbReference type="GO" id="GO:0046040">
    <property type="term" value="P:IMP metabolic process"/>
    <property type="evidence" value="ECO:0007669"/>
    <property type="project" value="TreeGrafter"/>
</dbReference>
<dbReference type="CDD" id="cd03108">
    <property type="entry name" value="AdSS"/>
    <property type="match status" value="1"/>
</dbReference>
<dbReference type="FunFam" id="1.10.300.10:FF:000001">
    <property type="entry name" value="Adenylosuccinate synthetase"/>
    <property type="match status" value="1"/>
</dbReference>
<dbReference type="FunFam" id="3.90.170.10:FF:000001">
    <property type="entry name" value="Adenylosuccinate synthetase"/>
    <property type="match status" value="1"/>
</dbReference>
<dbReference type="Gene3D" id="3.40.440.10">
    <property type="entry name" value="Adenylosuccinate Synthetase, subunit A, domain 1"/>
    <property type="match status" value="1"/>
</dbReference>
<dbReference type="Gene3D" id="1.10.300.10">
    <property type="entry name" value="Adenylosuccinate Synthetase, subunit A, domain 2"/>
    <property type="match status" value="1"/>
</dbReference>
<dbReference type="Gene3D" id="3.90.170.10">
    <property type="entry name" value="Adenylosuccinate Synthetase, subunit A, domain 3"/>
    <property type="match status" value="1"/>
</dbReference>
<dbReference type="HAMAP" id="MF_00011">
    <property type="entry name" value="Adenylosucc_synth"/>
    <property type="match status" value="1"/>
</dbReference>
<dbReference type="InterPro" id="IPR018220">
    <property type="entry name" value="Adenylosuccin_syn_GTP-bd"/>
</dbReference>
<dbReference type="InterPro" id="IPR033128">
    <property type="entry name" value="Adenylosuccin_syn_Lys_AS"/>
</dbReference>
<dbReference type="InterPro" id="IPR042109">
    <property type="entry name" value="Adenylosuccinate_synth_dom1"/>
</dbReference>
<dbReference type="InterPro" id="IPR042110">
    <property type="entry name" value="Adenylosuccinate_synth_dom2"/>
</dbReference>
<dbReference type="InterPro" id="IPR042111">
    <property type="entry name" value="Adenylosuccinate_synth_dom3"/>
</dbReference>
<dbReference type="InterPro" id="IPR001114">
    <property type="entry name" value="Adenylosuccinate_synthetase"/>
</dbReference>
<dbReference type="InterPro" id="IPR027417">
    <property type="entry name" value="P-loop_NTPase"/>
</dbReference>
<dbReference type="NCBIfam" id="NF002223">
    <property type="entry name" value="PRK01117.1"/>
    <property type="match status" value="1"/>
</dbReference>
<dbReference type="NCBIfam" id="TIGR00184">
    <property type="entry name" value="purA"/>
    <property type="match status" value="1"/>
</dbReference>
<dbReference type="PANTHER" id="PTHR11846">
    <property type="entry name" value="ADENYLOSUCCINATE SYNTHETASE"/>
    <property type="match status" value="1"/>
</dbReference>
<dbReference type="PANTHER" id="PTHR11846:SF0">
    <property type="entry name" value="ADENYLOSUCCINATE SYNTHETASE"/>
    <property type="match status" value="1"/>
</dbReference>
<dbReference type="Pfam" id="PF00709">
    <property type="entry name" value="Adenylsucc_synt"/>
    <property type="match status" value="1"/>
</dbReference>
<dbReference type="SMART" id="SM00788">
    <property type="entry name" value="Adenylsucc_synt"/>
    <property type="match status" value="1"/>
</dbReference>
<dbReference type="SUPFAM" id="SSF52540">
    <property type="entry name" value="P-loop containing nucleoside triphosphate hydrolases"/>
    <property type="match status" value="1"/>
</dbReference>
<dbReference type="PROSITE" id="PS01266">
    <property type="entry name" value="ADENYLOSUCCIN_SYN_1"/>
    <property type="match status" value="1"/>
</dbReference>
<dbReference type="PROSITE" id="PS00513">
    <property type="entry name" value="ADENYLOSUCCIN_SYN_2"/>
    <property type="match status" value="1"/>
</dbReference>
<organism>
    <name type="scientific">Bacillus cytotoxicus (strain DSM 22905 / CIP 110041 / 391-98 / NVH 391-98)</name>
    <dbReference type="NCBI Taxonomy" id="315749"/>
    <lineage>
        <taxon>Bacteria</taxon>
        <taxon>Bacillati</taxon>
        <taxon>Bacillota</taxon>
        <taxon>Bacilli</taxon>
        <taxon>Bacillales</taxon>
        <taxon>Bacillaceae</taxon>
        <taxon>Bacillus</taxon>
        <taxon>Bacillus cereus group</taxon>
    </lineage>
</organism>
<accession>A7GVN0</accession>
<name>PURA_BACCN</name>
<comment type="function">
    <text evidence="1">Plays an important role in the de novo pathway of purine nucleotide biosynthesis. Catalyzes the first committed step in the biosynthesis of AMP from IMP.</text>
</comment>
<comment type="catalytic activity">
    <reaction evidence="1">
        <text>IMP + L-aspartate + GTP = N(6)-(1,2-dicarboxyethyl)-AMP + GDP + phosphate + 2 H(+)</text>
        <dbReference type="Rhea" id="RHEA:15753"/>
        <dbReference type="ChEBI" id="CHEBI:15378"/>
        <dbReference type="ChEBI" id="CHEBI:29991"/>
        <dbReference type="ChEBI" id="CHEBI:37565"/>
        <dbReference type="ChEBI" id="CHEBI:43474"/>
        <dbReference type="ChEBI" id="CHEBI:57567"/>
        <dbReference type="ChEBI" id="CHEBI:58053"/>
        <dbReference type="ChEBI" id="CHEBI:58189"/>
        <dbReference type="EC" id="6.3.4.4"/>
    </reaction>
</comment>
<comment type="cofactor">
    <cofactor evidence="1">
        <name>Mg(2+)</name>
        <dbReference type="ChEBI" id="CHEBI:18420"/>
    </cofactor>
    <text evidence="1">Binds 1 Mg(2+) ion per subunit.</text>
</comment>
<comment type="pathway">
    <text evidence="1">Purine metabolism; AMP biosynthesis via de novo pathway; AMP from IMP: step 1/2.</text>
</comment>
<comment type="subunit">
    <text evidence="1">Homodimer.</text>
</comment>
<comment type="subcellular location">
    <subcellularLocation>
        <location evidence="1">Cytoplasm</location>
    </subcellularLocation>
</comment>
<comment type="similarity">
    <text evidence="1">Belongs to the adenylosuccinate synthetase family.</text>
</comment>
<reference key="1">
    <citation type="journal article" date="2008" name="Chem. Biol. Interact.">
        <title>Extending the Bacillus cereus group genomics to putative food-borne pathogens of different toxicity.</title>
        <authorList>
            <person name="Lapidus A."/>
            <person name="Goltsman E."/>
            <person name="Auger S."/>
            <person name="Galleron N."/>
            <person name="Segurens B."/>
            <person name="Dossat C."/>
            <person name="Land M.L."/>
            <person name="Broussolle V."/>
            <person name="Brillard J."/>
            <person name="Guinebretiere M.-H."/>
            <person name="Sanchis V."/>
            <person name="Nguen-the C."/>
            <person name="Lereclus D."/>
            <person name="Richardson P."/>
            <person name="Wincker P."/>
            <person name="Weissenbach J."/>
            <person name="Ehrlich S.D."/>
            <person name="Sorokin A."/>
        </authorList>
    </citation>
    <scope>NUCLEOTIDE SEQUENCE [LARGE SCALE GENOMIC DNA]</scope>
    <source>
        <strain>DSM 22905 / CIP 110041 / 391-98 / NVH 391-98</strain>
    </source>
</reference>
<evidence type="ECO:0000255" key="1">
    <source>
        <dbReference type="HAMAP-Rule" id="MF_00011"/>
    </source>
</evidence>
<keyword id="KW-0963">Cytoplasm</keyword>
<keyword id="KW-0342">GTP-binding</keyword>
<keyword id="KW-0436">Ligase</keyword>
<keyword id="KW-0460">Magnesium</keyword>
<keyword id="KW-0479">Metal-binding</keyword>
<keyword id="KW-0547">Nucleotide-binding</keyword>
<keyword id="KW-0658">Purine biosynthesis</keyword>
<feature type="chain" id="PRO_1000073936" description="Adenylosuccinate synthetase">
    <location>
        <begin position="1"/>
        <end position="429"/>
    </location>
</feature>
<feature type="active site" description="Proton acceptor" evidence="1">
    <location>
        <position position="13"/>
    </location>
</feature>
<feature type="active site" description="Proton donor" evidence="1">
    <location>
        <position position="41"/>
    </location>
</feature>
<feature type="binding site" evidence="1">
    <location>
        <begin position="12"/>
        <end position="18"/>
    </location>
    <ligand>
        <name>GTP</name>
        <dbReference type="ChEBI" id="CHEBI:37565"/>
    </ligand>
</feature>
<feature type="binding site" description="in other chain" evidence="1">
    <location>
        <begin position="13"/>
        <end position="16"/>
    </location>
    <ligand>
        <name>IMP</name>
        <dbReference type="ChEBI" id="CHEBI:58053"/>
        <note>ligand shared between dimeric partners</note>
    </ligand>
</feature>
<feature type="binding site" evidence="1">
    <location>
        <position position="13"/>
    </location>
    <ligand>
        <name>Mg(2+)</name>
        <dbReference type="ChEBI" id="CHEBI:18420"/>
    </ligand>
</feature>
<feature type="binding site" description="in other chain" evidence="1">
    <location>
        <begin position="38"/>
        <end position="41"/>
    </location>
    <ligand>
        <name>IMP</name>
        <dbReference type="ChEBI" id="CHEBI:58053"/>
        <note>ligand shared between dimeric partners</note>
    </ligand>
</feature>
<feature type="binding site" evidence="1">
    <location>
        <begin position="40"/>
        <end position="42"/>
    </location>
    <ligand>
        <name>GTP</name>
        <dbReference type="ChEBI" id="CHEBI:37565"/>
    </ligand>
</feature>
<feature type="binding site" evidence="1">
    <location>
        <position position="40"/>
    </location>
    <ligand>
        <name>Mg(2+)</name>
        <dbReference type="ChEBI" id="CHEBI:18420"/>
    </ligand>
</feature>
<feature type="binding site" description="in other chain" evidence="1">
    <location>
        <position position="128"/>
    </location>
    <ligand>
        <name>IMP</name>
        <dbReference type="ChEBI" id="CHEBI:58053"/>
        <note>ligand shared between dimeric partners</note>
    </ligand>
</feature>
<feature type="binding site" evidence="1">
    <location>
        <position position="142"/>
    </location>
    <ligand>
        <name>IMP</name>
        <dbReference type="ChEBI" id="CHEBI:58053"/>
        <note>ligand shared between dimeric partners</note>
    </ligand>
</feature>
<feature type="binding site" description="in other chain" evidence="1">
    <location>
        <position position="223"/>
    </location>
    <ligand>
        <name>IMP</name>
        <dbReference type="ChEBI" id="CHEBI:58053"/>
        <note>ligand shared between dimeric partners</note>
    </ligand>
</feature>
<feature type="binding site" description="in other chain" evidence="1">
    <location>
        <position position="238"/>
    </location>
    <ligand>
        <name>IMP</name>
        <dbReference type="ChEBI" id="CHEBI:58053"/>
        <note>ligand shared between dimeric partners</note>
    </ligand>
</feature>
<feature type="binding site" evidence="1">
    <location>
        <begin position="298"/>
        <end position="304"/>
    </location>
    <ligand>
        <name>substrate</name>
    </ligand>
</feature>
<feature type="binding site" description="in other chain" evidence="1">
    <location>
        <position position="302"/>
    </location>
    <ligand>
        <name>IMP</name>
        <dbReference type="ChEBI" id="CHEBI:58053"/>
        <note>ligand shared between dimeric partners</note>
    </ligand>
</feature>
<feature type="binding site" evidence="1">
    <location>
        <position position="304"/>
    </location>
    <ligand>
        <name>GTP</name>
        <dbReference type="ChEBI" id="CHEBI:37565"/>
    </ligand>
</feature>
<feature type="binding site" evidence="1">
    <location>
        <begin position="330"/>
        <end position="332"/>
    </location>
    <ligand>
        <name>GTP</name>
        <dbReference type="ChEBI" id="CHEBI:37565"/>
    </ligand>
</feature>
<feature type="binding site" evidence="1">
    <location>
        <begin position="412"/>
        <end position="414"/>
    </location>
    <ligand>
        <name>GTP</name>
        <dbReference type="ChEBI" id="CHEBI:37565"/>
    </ligand>
</feature>
<protein>
    <recommendedName>
        <fullName evidence="1">Adenylosuccinate synthetase</fullName>
        <shortName evidence="1">AMPSase</shortName>
        <shortName evidence="1">AdSS</shortName>
        <ecNumber evidence="1">6.3.4.4</ecNumber>
    </recommendedName>
    <alternativeName>
        <fullName evidence="1">IMP--aspartate ligase</fullName>
    </alternativeName>
</protein>
<gene>
    <name evidence="1" type="primary">purA</name>
    <name type="ordered locus">Bcer98_4007</name>
</gene>
<sequence length="429" mass="47590">MSSVVVVGTQWGDEGKGKITDFLSEHAEVVARYQGGNNAGHTIVFNGVKYKLHLIPSGIFYKEKICVIGNGMVVDPKALLVELKYLHDRGVSTDNLRISNRAHVILPYHLKQDELEEERKGDNKIGTTKKGIGPAYMDKAARIGIRMADLLDREAFKEKLERNLAEKNRLFEKMYDAEGFNVDEIFEEYYEYGQQIAQYVCDTSVVLNDALDEGRRVLFEGAQGVMLDIDQGTYPFVTSSNPVAGGVTIGSGVGPSKIKRVVGVCKAYTSRVGDGPFPTELHDEIGQQIREVGREYGTTTGRPRRVGWFDSVVVRHARRVSGLTDLSLNSIDVLTGIPTVKICVAYKYNGEVLDEVPANLNILAKCEPVYEELPGWTEDITGVKSLEELPENARHYVERVSQLTGIPLAMFSVGPDRSQTNIVRNVYGI</sequence>